<organism>
    <name type="scientific">Brucella melitensis biotype 1 (strain ATCC 23456 / CCUG 17765 / NCTC 10094 / 16M)</name>
    <dbReference type="NCBI Taxonomy" id="224914"/>
    <lineage>
        <taxon>Bacteria</taxon>
        <taxon>Pseudomonadati</taxon>
        <taxon>Pseudomonadota</taxon>
        <taxon>Alphaproteobacteria</taxon>
        <taxon>Hyphomicrobiales</taxon>
        <taxon>Brucellaceae</taxon>
        <taxon>Brucella/Ochrobactrum group</taxon>
        <taxon>Brucella</taxon>
    </lineage>
</organism>
<protein>
    <recommendedName>
        <fullName evidence="1">Heme A synthase</fullName>
        <shortName evidence="1">HAS</shortName>
        <ecNumber evidence="1">1.17.99.9</ecNumber>
    </recommendedName>
    <alternativeName>
        <fullName evidence="1">Cytochrome aa3-controlling protein</fullName>
    </alternativeName>
</protein>
<proteinExistence type="inferred from homology"/>
<dbReference type="EC" id="1.17.99.9" evidence="1"/>
<dbReference type="EMBL" id="AE008917">
    <property type="protein sequence ID" value="AAL52353.1"/>
    <property type="status" value="ALT_INIT"/>
    <property type="molecule type" value="Genomic_DNA"/>
</dbReference>
<dbReference type="PIR" id="AF3398">
    <property type="entry name" value="AF3398"/>
</dbReference>
<dbReference type="RefSeq" id="WP_002969419.1">
    <property type="nucleotide sequence ID" value="NZ_GG703778.1"/>
</dbReference>
<dbReference type="SMR" id="Q8YGI7"/>
<dbReference type="KEGG" id="bme:BMEI1172"/>
<dbReference type="KEGG" id="bmel:DK63_239"/>
<dbReference type="PATRIC" id="fig|224914.52.peg.248"/>
<dbReference type="eggNOG" id="COG1612">
    <property type="taxonomic scope" value="Bacteria"/>
</dbReference>
<dbReference type="PhylomeDB" id="Q8YGI7"/>
<dbReference type="UniPathway" id="UPA00269">
    <property type="reaction ID" value="UER00713"/>
</dbReference>
<dbReference type="Proteomes" id="UP000000419">
    <property type="component" value="Chromosome I"/>
</dbReference>
<dbReference type="GO" id="GO:0005886">
    <property type="term" value="C:plasma membrane"/>
    <property type="evidence" value="ECO:0007669"/>
    <property type="project" value="UniProtKB-SubCell"/>
</dbReference>
<dbReference type="GO" id="GO:0046872">
    <property type="term" value="F:metal ion binding"/>
    <property type="evidence" value="ECO:0007669"/>
    <property type="project" value="UniProtKB-KW"/>
</dbReference>
<dbReference type="GO" id="GO:0016653">
    <property type="term" value="F:oxidoreductase activity, acting on NAD(P)H, heme protein as acceptor"/>
    <property type="evidence" value="ECO:0007669"/>
    <property type="project" value="InterPro"/>
</dbReference>
<dbReference type="GO" id="GO:0006784">
    <property type="term" value="P:heme A biosynthetic process"/>
    <property type="evidence" value="ECO:0007669"/>
    <property type="project" value="UniProtKB-UniRule"/>
</dbReference>
<dbReference type="HAMAP" id="MF_01665">
    <property type="entry name" value="HemeA_synth_type2"/>
    <property type="match status" value="1"/>
</dbReference>
<dbReference type="InterPro" id="IPR003780">
    <property type="entry name" value="COX15/CtaA_fam"/>
</dbReference>
<dbReference type="InterPro" id="IPR023754">
    <property type="entry name" value="HemeA_Synthase_type2"/>
</dbReference>
<dbReference type="PANTHER" id="PTHR23289">
    <property type="entry name" value="CYTOCHROME C OXIDASE ASSEMBLY PROTEIN COX15"/>
    <property type="match status" value="1"/>
</dbReference>
<dbReference type="PANTHER" id="PTHR23289:SF2">
    <property type="entry name" value="CYTOCHROME C OXIDASE ASSEMBLY PROTEIN COX15 HOMOLOG"/>
    <property type="match status" value="1"/>
</dbReference>
<dbReference type="Pfam" id="PF02628">
    <property type="entry name" value="COX15-CtaA"/>
    <property type="match status" value="1"/>
</dbReference>
<sequence length="358" mass="40048">MAATSAQHIGLQGHGTSRNDRDRRLVRYWLYAVFAVLIAIVMVGGATRMTGSGLSITEWKPIHGVIPPLNHAEWVEEFEKYQQIPQYQQINKGMSLAEFQYIFWWEWAHRLLARFVGFLVAVPLGFFWLTGRLKGGLKYRMLGLLALGGLQGAIGWWMVASGLSELTSVSQYRLAIHLTTACVIITAVFYIARGLVTYSERPAERSIQRFAGWIVFAVLVQIYLGGLVAGLHAGLTYNTWPLMDGAIIPSDLFTQAPWWRNLFENPKTVQFVHRMFAYTVLLLAILHAVQVWKNAPGTTHARRTIVLVGLVFIQAMIGIATLLMSAPLHLGLTHQFFALVVLAFAVAHWRATKGAYAA</sequence>
<gene>
    <name evidence="1" type="primary">ctaA</name>
    <name type="ordered locus">BMEI1172</name>
</gene>
<reference key="1">
    <citation type="journal article" date="2002" name="Proc. Natl. Acad. Sci. U.S.A.">
        <title>The genome sequence of the facultative intracellular pathogen Brucella melitensis.</title>
        <authorList>
            <person name="DelVecchio V.G."/>
            <person name="Kapatral V."/>
            <person name="Redkar R.J."/>
            <person name="Patra G."/>
            <person name="Mujer C."/>
            <person name="Los T."/>
            <person name="Ivanova N."/>
            <person name="Anderson I."/>
            <person name="Bhattacharyya A."/>
            <person name="Lykidis A."/>
            <person name="Reznik G."/>
            <person name="Jablonski L."/>
            <person name="Larsen N."/>
            <person name="D'Souza M."/>
            <person name="Bernal A."/>
            <person name="Mazur M."/>
            <person name="Goltsman E."/>
            <person name="Selkov E."/>
            <person name="Elzer P.H."/>
            <person name="Hagius S."/>
            <person name="O'Callaghan D."/>
            <person name="Letesson J.-J."/>
            <person name="Haselkorn R."/>
            <person name="Kyrpides N.C."/>
            <person name="Overbeek R."/>
        </authorList>
    </citation>
    <scope>NUCLEOTIDE SEQUENCE [LARGE SCALE GENOMIC DNA]</scope>
    <source>
        <strain>ATCC 23456 / CCUG 17765 / NCTC 10094 / 16M</strain>
    </source>
</reference>
<feature type="chain" id="PRO_0000349023" description="Heme A synthase">
    <location>
        <begin position="1"/>
        <end position="358"/>
    </location>
</feature>
<feature type="transmembrane region" description="Helical" evidence="1">
    <location>
        <begin position="25"/>
        <end position="45"/>
    </location>
</feature>
<feature type="transmembrane region" description="Helical" evidence="1">
    <location>
        <begin position="111"/>
        <end position="131"/>
    </location>
</feature>
<feature type="transmembrane region" description="Helical" evidence="1">
    <location>
        <begin position="141"/>
        <end position="161"/>
    </location>
</feature>
<feature type="transmembrane region" description="Helical" evidence="1">
    <location>
        <begin position="176"/>
        <end position="196"/>
    </location>
</feature>
<feature type="transmembrane region" description="Helical" evidence="1">
    <location>
        <begin position="210"/>
        <end position="230"/>
    </location>
</feature>
<feature type="transmembrane region" description="Helical" evidence="1">
    <location>
        <begin position="269"/>
        <end position="289"/>
    </location>
</feature>
<feature type="transmembrane region" description="Helical" evidence="1">
    <location>
        <begin position="304"/>
        <end position="324"/>
    </location>
</feature>
<feature type="transmembrane region" description="Helical" evidence="1">
    <location>
        <begin position="326"/>
        <end position="346"/>
    </location>
</feature>
<feature type="binding site" description="axial binding residue" evidence="1">
    <location>
        <position position="273"/>
    </location>
    <ligand>
        <name>heme</name>
        <dbReference type="ChEBI" id="CHEBI:30413"/>
    </ligand>
    <ligandPart>
        <name>Fe</name>
        <dbReference type="ChEBI" id="CHEBI:18248"/>
    </ligandPart>
</feature>
<feature type="binding site" description="axial binding residue" evidence="1">
    <location>
        <position position="334"/>
    </location>
    <ligand>
        <name>heme</name>
        <dbReference type="ChEBI" id="CHEBI:30413"/>
    </ligand>
    <ligandPart>
        <name>Fe</name>
        <dbReference type="ChEBI" id="CHEBI:18248"/>
    </ligandPart>
</feature>
<name>CTAA_BRUME</name>
<comment type="function">
    <text evidence="1">Catalyzes the conversion of heme O to heme A by two successive hydroxylations of the methyl group at C8. The first hydroxylation forms heme I, the second hydroxylation results in an unstable dihydroxymethyl group, which spontaneously dehydrates, resulting in the formyl group of heme A.</text>
</comment>
<comment type="catalytic activity">
    <reaction evidence="1">
        <text>Fe(II)-heme o + 2 A + H2O = Fe(II)-heme a + 2 AH2</text>
        <dbReference type="Rhea" id="RHEA:63388"/>
        <dbReference type="ChEBI" id="CHEBI:13193"/>
        <dbReference type="ChEBI" id="CHEBI:15377"/>
        <dbReference type="ChEBI" id="CHEBI:17499"/>
        <dbReference type="ChEBI" id="CHEBI:60530"/>
        <dbReference type="ChEBI" id="CHEBI:61715"/>
        <dbReference type="EC" id="1.17.99.9"/>
    </reaction>
    <physiologicalReaction direction="left-to-right" evidence="1">
        <dbReference type="Rhea" id="RHEA:63389"/>
    </physiologicalReaction>
</comment>
<comment type="cofactor">
    <cofactor evidence="1">
        <name>heme b</name>
        <dbReference type="ChEBI" id="CHEBI:60344"/>
    </cofactor>
</comment>
<comment type="pathway">
    <text evidence="1">Porphyrin-containing compound metabolism; heme A biosynthesis; heme A from heme O: step 1/1.</text>
</comment>
<comment type="subunit">
    <text evidence="1">Interacts with CtaB.</text>
</comment>
<comment type="subcellular location">
    <subcellularLocation>
        <location evidence="1">Cell membrane</location>
        <topology evidence="1">Multi-pass membrane protein</topology>
    </subcellularLocation>
</comment>
<comment type="similarity">
    <text evidence="1">Belongs to the COX15/CtaA family. Type 2 subfamily.</text>
</comment>
<comment type="sequence caution" evidence="2">
    <conflict type="erroneous initiation">
        <sequence resource="EMBL-CDS" id="AAL52353"/>
    </conflict>
</comment>
<accession>Q8YGI7</accession>
<keyword id="KW-1003">Cell membrane</keyword>
<keyword id="KW-0350">Heme biosynthesis</keyword>
<keyword id="KW-0408">Iron</keyword>
<keyword id="KW-0472">Membrane</keyword>
<keyword id="KW-0479">Metal-binding</keyword>
<keyword id="KW-0560">Oxidoreductase</keyword>
<keyword id="KW-0812">Transmembrane</keyword>
<keyword id="KW-1133">Transmembrane helix</keyword>
<evidence type="ECO:0000255" key="1">
    <source>
        <dbReference type="HAMAP-Rule" id="MF_01665"/>
    </source>
</evidence>
<evidence type="ECO:0000305" key="2"/>